<keyword id="KW-1003">Cell membrane</keyword>
<keyword id="KW-0406">Ion transport</keyword>
<keyword id="KW-0408">Iron</keyword>
<keyword id="KW-0472">Membrane</keyword>
<keyword id="KW-0479">Metal-binding</keyword>
<keyword id="KW-0812">Transmembrane</keyword>
<keyword id="KW-1133">Transmembrane helix</keyword>
<keyword id="KW-0813">Transport</keyword>
<keyword id="KW-0862">Zinc</keyword>
<keyword id="KW-0864">Zinc transport</keyword>
<gene>
    <name evidence="1" type="primary">zupT</name>
    <name type="ordered locus">Bsph_4352</name>
</gene>
<feature type="chain" id="PRO_1000128957" description="Zinc transporter ZupT">
    <location>
        <begin position="1"/>
        <end position="269"/>
    </location>
</feature>
<feature type="transmembrane region" description="Helical" evidence="1">
    <location>
        <begin position="5"/>
        <end position="25"/>
    </location>
</feature>
<feature type="transmembrane region" description="Helical" evidence="1">
    <location>
        <begin position="38"/>
        <end position="58"/>
    </location>
</feature>
<feature type="transmembrane region" description="Helical" evidence="1">
    <location>
        <begin position="75"/>
        <end position="95"/>
    </location>
</feature>
<feature type="transmembrane region" description="Helical" evidence="1">
    <location>
        <begin position="125"/>
        <end position="145"/>
    </location>
</feature>
<feature type="transmembrane region" description="Helical" evidence="1">
    <location>
        <begin position="158"/>
        <end position="178"/>
    </location>
</feature>
<feature type="transmembrane region" description="Helical" evidence="1">
    <location>
        <begin position="190"/>
        <end position="210"/>
    </location>
</feature>
<feature type="transmembrane region" description="Helical" evidence="1">
    <location>
        <begin position="212"/>
        <end position="232"/>
    </location>
</feature>
<feature type="transmembrane region" description="Helical" evidence="1">
    <location>
        <begin position="249"/>
        <end position="269"/>
    </location>
</feature>
<feature type="binding site" description="M2 metal binding site" evidence="1">
    <location>
        <position position="137"/>
    </location>
    <ligand>
        <name>Fe(2+)</name>
        <dbReference type="ChEBI" id="CHEBI:29033"/>
    </ligand>
</feature>
<feature type="binding site" description="M2 metal binding site" evidence="1">
    <location>
        <position position="140"/>
    </location>
    <ligand>
        <name>Fe(2+)</name>
        <dbReference type="ChEBI" id="CHEBI:29033"/>
    </ligand>
</feature>
<feature type="binding site" description="M1 metal binding site" evidence="1">
    <location>
        <position position="140"/>
    </location>
    <ligand>
        <name>Zn(2+)</name>
        <dbReference type="ChEBI" id="CHEBI:29105"/>
    </ligand>
</feature>
<feature type="binding site" description="M1 metal binding site" evidence="1">
    <location>
        <position position="165"/>
    </location>
    <ligand>
        <name>Zn(2+)</name>
        <dbReference type="ChEBI" id="CHEBI:29105"/>
    </ligand>
</feature>
<feature type="binding site" description="M2 metal binding site" evidence="1">
    <location>
        <position position="166"/>
    </location>
    <ligand>
        <name>Fe(2+)</name>
        <dbReference type="ChEBI" id="CHEBI:29033"/>
    </ligand>
</feature>
<feature type="binding site" description="M2 metal binding site" evidence="1">
    <location>
        <position position="169"/>
    </location>
    <ligand>
        <name>Fe(2+)</name>
        <dbReference type="ChEBI" id="CHEBI:29033"/>
    </ligand>
</feature>
<feature type="binding site" description="M1 metal binding site" evidence="1">
    <location>
        <position position="169"/>
    </location>
    <ligand>
        <name>Zn(2+)</name>
        <dbReference type="ChEBI" id="CHEBI:29105"/>
    </ligand>
</feature>
<feature type="binding site" description="M2 metal binding site" evidence="1">
    <location>
        <position position="198"/>
    </location>
    <ligand>
        <name>Fe(2+)</name>
        <dbReference type="ChEBI" id="CHEBI:29033"/>
    </ligand>
</feature>
<sequence length="269" mass="28583">MDGNVLLAFGLTLFAGLATGVGSLIAFFTSRTNTKFLSLALGFSAGVMIYVSLVEIFVKAKDALTNALGNTNGYWMTIAGFFGGMLFIALIDKFIPKSSNPHEVKLVEDVNAIKPQVNEDHLMKMGIFTALAIGIHNFPEGIATFMSAINDPNVGIAIAIAVAIHNIPEGIAVSVPIFFATGNRRKAFKLSFLSGLAEPVGALVAFLLLMPFLTDVMFGIIFAGVAGIMVFISLDELLPAAQRYDETHLSMYGLVGGMAVMAISLVLLV</sequence>
<reference key="1">
    <citation type="journal article" date="2008" name="J. Bacteriol.">
        <title>Complete genome sequence of the mosquitocidal bacterium Bacillus sphaericus C3-41 and comparison with those of closely related Bacillus species.</title>
        <authorList>
            <person name="Hu X."/>
            <person name="Fan W."/>
            <person name="Han B."/>
            <person name="Liu H."/>
            <person name="Zheng D."/>
            <person name="Li Q."/>
            <person name="Dong W."/>
            <person name="Yan J."/>
            <person name="Gao M."/>
            <person name="Berry C."/>
            <person name="Yuan Z."/>
        </authorList>
    </citation>
    <scope>NUCLEOTIDE SEQUENCE [LARGE SCALE GENOMIC DNA]</scope>
    <source>
        <strain>C3-41</strain>
    </source>
</reference>
<comment type="function">
    <text evidence="1">Mediates zinc uptake. May also transport other divalent cations.</text>
</comment>
<comment type="catalytic activity">
    <reaction evidence="1">
        <text>Zn(2+)(in) = Zn(2+)(out)</text>
        <dbReference type="Rhea" id="RHEA:29351"/>
        <dbReference type="ChEBI" id="CHEBI:29105"/>
    </reaction>
</comment>
<comment type="subcellular location">
    <subcellularLocation>
        <location evidence="1">Cell membrane</location>
        <topology evidence="1">Multi-pass membrane protein</topology>
    </subcellularLocation>
</comment>
<comment type="similarity">
    <text evidence="1">Belongs to the ZIP transporter (TC 2.A.5) family. ZupT subfamily.</text>
</comment>
<dbReference type="EMBL" id="CP000817">
    <property type="protein sequence ID" value="ACA41809.1"/>
    <property type="molecule type" value="Genomic_DNA"/>
</dbReference>
<dbReference type="RefSeq" id="WP_012295831.1">
    <property type="nucleotide sequence ID" value="NC_010382.1"/>
</dbReference>
<dbReference type="SMR" id="B1HYT6"/>
<dbReference type="EnsemblBacteria" id="ACA41809">
    <property type="protein sequence ID" value="ACA41809"/>
    <property type="gene ID" value="Bsph_4352"/>
</dbReference>
<dbReference type="KEGG" id="lsp:Bsph_4352"/>
<dbReference type="HOGENOM" id="CLU_015114_1_3_9"/>
<dbReference type="Proteomes" id="UP000002164">
    <property type="component" value="Chromosome"/>
</dbReference>
<dbReference type="GO" id="GO:0005886">
    <property type="term" value="C:plasma membrane"/>
    <property type="evidence" value="ECO:0007669"/>
    <property type="project" value="UniProtKB-SubCell"/>
</dbReference>
<dbReference type="GO" id="GO:0046872">
    <property type="term" value="F:metal ion binding"/>
    <property type="evidence" value="ECO:0007669"/>
    <property type="project" value="UniProtKB-KW"/>
</dbReference>
<dbReference type="GO" id="GO:0005385">
    <property type="term" value="F:zinc ion transmembrane transporter activity"/>
    <property type="evidence" value="ECO:0007669"/>
    <property type="project" value="UniProtKB-UniRule"/>
</dbReference>
<dbReference type="HAMAP" id="MF_00548">
    <property type="entry name" value="ZupT"/>
    <property type="match status" value="1"/>
</dbReference>
<dbReference type="InterPro" id="IPR003689">
    <property type="entry name" value="ZIP"/>
</dbReference>
<dbReference type="InterPro" id="IPR023498">
    <property type="entry name" value="Zn_transptr_ZupT"/>
</dbReference>
<dbReference type="NCBIfam" id="NF003243">
    <property type="entry name" value="PRK04201.1"/>
    <property type="match status" value="1"/>
</dbReference>
<dbReference type="PANTHER" id="PTHR11040:SF205">
    <property type="entry name" value="ZINC TRANSPORTER ZUPT"/>
    <property type="match status" value="1"/>
</dbReference>
<dbReference type="PANTHER" id="PTHR11040">
    <property type="entry name" value="ZINC/IRON TRANSPORTER"/>
    <property type="match status" value="1"/>
</dbReference>
<dbReference type="Pfam" id="PF02535">
    <property type="entry name" value="Zip"/>
    <property type="match status" value="1"/>
</dbReference>
<proteinExistence type="inferred from homology"/>
<protein>
    <recommendedName>
        <fullName evidence="1">Zinc transporter ZupT</fullName>
    </recommendedName>
</protein>
<name>ZUPT_LYSSC</name>
<accession>B1HYT6</accession>
<evidence type="ECO:0000255" key="1">
    <source>
        <dbReference type="HAMAP-Rule" id="MF_00548"/>
    </source>
</evidence>
<organism>
    <name type="scientific">Lysinibacillus sphaericus (strain C3-41)</name>
    <dbReference type="NCBI Taxonomy" id="444177"/>
    <lineage>
        <taxon>Bacteria</taxon>
        <taxon>Bacillati</taxon>
        <taxon>Bacillota</taxon>
        <taxon>Bacilli</taxon>
        <taxon>Bacillales</taxon>
        <taxon>Bacillaceae</taxon>
        <taxon>Lysinibacillus</taxon>
    </lineage>
</organism>